<protein>
    <recommendedName>
        <fullName evidence="1">dCTP deaminase</fullName>
        <ecNumber evidence="1">3.5.4.13</ecNumber>
    </recommendedName>
    <alternativeName>
        <fullName evidence="1">Deoxycytidine triphosphate deaminase</fullName>
    </alternativeName>
</protein>
<gene>
    <name evidence="1" type="primary">dcd</name>
    <name type="ordered locus">DNO_0507</name>
</gene>
<feature type="chain" id="PRO_1000009715" description="dCTP deaminase">
    <location>
        <begin position="1"/>
        <end position="188"/>
    </location>
</feature>
<feature type="active site" description="Proton donor/acceptor" evidence="1">
    <location>
        <position position="137"/>
    </location>
</feature>
<feature type="binding site" evidence="1">
    <location>
        <begin position="111"/>
        <end position="116"/>
    </location>
    <ligand>
        <name>dCTP</name>
        <dbReference type="ChEBI" id="CHEBI:61481"/>
    </ligand>
</feature>
<feature type="binding site" evidence="1">
    <location>
        <begin position="135"/>
        <end position="137"/>
    </location>
    <ligand>
        <name>dCTP</name>
        <dbReference type="ChEBI" id="CHEBI:61481"/>
    </ligand>
</feature>
<feature type="binding site" evidence="1">
    <location>
        <position position="156"/>
    </location>
    <ligand>
        <name>dCTP</name>
        <dbReference type="ChEBI" id="CHEBI:61481"/>
    </ligand>
</feature>
<feature type="binding site" evidence="1">
    <location>
        <position position="170"/>
    </location>
    <ligand>
        <name>dCTP</name>
        <dbReference type="ChEBI" id="CHEBI:61481"/>
    </ligand>
</feature>
<feature type="binding site" evidence="1">
    <location>
        <position position="180"/>
    </location>
    <ligand>
        <name>dCTP</name>
        <dbReference type="ChEBI" id="CHEBI:61481"/>
    </ligand>
</feature>
<keyword id="KW-0378">Hydrolase</keyword>
<keyword id="KW-0546">Nucleotide metabolism</keyword>
<keyword id="KW-0547">Nucleotide-binding</keyword>
<keyword id="KW-1185">Reference proteome</keyword>
<reference key="1">
    <citation type="journal article" date="2007" name="Nat. Biotechnol.">
        <title>Genome sequence and identification of candidate vaccine antigens from the animal pathogen Dichelobacter nodosus.</title>
        <authorList>
            <person name="Myers G.S.A."/>
            <person name="Parker D."/>
            <person name="Al-Hasani K."/>
            <person name="Kennan R.M."/>
            <person name="Seemann T."/>
            <person name="Ren Q."/>
            <person name="Badger J.H."/>
            <person name="Selengut J.D."/>
            <person name="Deboy R.T."/>
            <person name="Tettelin H."/>
            <person name="Boyce J.D."/>
            <person name="McCarl V.P."/>
            <person name="Han X."/>
            <person name="Nelson W.C."/>
            <person name="Madupu R."/>
            <person name="Mohamoud Y."/>
            <person name="Holley T."/>
            <person name="Fedorova N."/>
            <person name="Khouri H."/>
            <person name="Bottomley S.P."/>
            <person name="Whittington R.J."/>
            <person name="Adler B."/>
            <person name="Songer J.G."/>
            <person name="Rood J.I."/>
            <person name="Paulsen I.T."/>
        </authorList>
    </citation>
    <scope>NUCLEOTIDE SEQUENCE [LARGE SCALE GENOMIC DNA]</scope>
    <source>
        <strain>VCS1703A</strain>
    </source>
</reference>
<comment type="function">
    <text evidence="1">Catalyzes the deamination of dCTP to dUTP.</text>
</comment>
<comment type="catalytic activity">
    <reaction evidence="1">
        <text>dCTP + H2O + H(+) = dUTP + NH4(+)</text>
        <dbReference type="Rhea" id="RHEA:22680"/>
        <dbReference type="ChEBI" id="CHEBI:15377"/>
        <dbReference type="ChEBI" id="CHEBI:15378"/>
        <dbReference type="ChEBI" id="CHEBI:28938"/>
        <dbReference type="ChEBI" id="CHEBI:61481"/>
        <dbReference type="ChEBI" id="CHEBI:61555"/>
        <dbReference type="EC" id="3.5.4.13"/>
    </reaction>
</comment>
<comment type="pathway">
    <text evidence="1">Pyrimidine metabolism; dUMP biosynthesis; dUMP from dCTP (dUTP route): step 1/2.</text>
</comment>
<comment type="subunit">
    <text evidence="1">Homotrimer.</text>
</comment>
<comment type="similarity">
    <text evidence="1">Belongs to the dCTP deaminase family.</text>
</comment>
<accession>A5EVM4</accession>
<dbReference type="EC" id="3.5.4.13" evidence="1"/>
<dbReference type="EMBL" id="CP000513">
    <property type="protein sequence ID" value="ABQ13630.1"/>
    <property type="molecule type" value="Genomic_DNA"/>
</dbReference>
<dbReference type="RefSeq" id="WP_012030842.1">
    <property type="nucleotide sequence ID" value="NC_009446.1"/>
</dbReference>
<dbReference type="SMR" id="A5EVM4"/>
<dbReference type="STRING" id="246195.DNO_0507"/>
<dbReference type="KEGG" id="dno:DNO_0507"/>
<dbReference type="eggNOG" id="COG0717">
    <property type="taxonomic scope" value="Bacteria"/>
</dbReference>
<dbReference type="HOGENOM" id="CLU_087476_4_0_6"/>
<dbReference type="OrthoDB" id="9780956at2"/>
<dbReference type="UniPathway" id="UPA00610">
    <property type="reaction ID" value="UER00665"/>
</dbReference>
<dbReference type="Proteomes" id="UP000000248">
    <property type="component" value="Chromosome"/>
</dbReference>
<dbReference type="GO" id="GO:0008829">
    <property type="term" value="F:dCTP deaminase activity"/>
    <property type="evidence" value="ECO:0007669"/>
    <property type="project" value="UniProtKB-UniRule"/>
</dbReference>
<dbReference type="GO" id="GO:0000166">
    <property type="term" value="F:nucleotide binding"/>
    <property type="evidence" value="ECO:0007669"/>
    <property type="project" value="UniProtKB-KW"/>
</dbReference>
<dbReference type="GO" id="GO:0006226">
    <property type="term" value="P:dUMP biosynthetic process"/>
    <property type="evidence" value="ECO:0007669"/>
    <property type="project" value="UniProtKB-UniPathway"/>
</dbReference>
<dbReference type="GO" id="GO:0006229">
    <property type="term" value="P:dUTP biosynthetic process"/>
    <property type="evidence" value="ECO:0007669"/>
    <property type="project" value="UniProtKB-UniRule"/>
</dbReference>
<dbReference type="GO" id="GO:0015949">
    <property type="term" value="P:nucleobase-containing small molecule interconversion"/>
    <property type="evidence" value="ECO:0007669"/>
    <property type="project" value="TreeGrafter"/>
</dbReference>
<dbReference type="CDD" id="cd07557">
    <property type="entry name" value="trimeric_dUTPase"/>
    <property type="match status" value="1"/>
</dbReference>
<dbReference type="FunFam" id="2.70.40.10:FF:000001">
    <property type="entry name" value="dCTP deaminase"/>
    <property type="match status" value="1"/>
</dbReference>
<dbReference type="Gene3D" id="2.70.40.10">
    <property type="match status" value="1"/>
</dbReference>
<dbReference type="HAMAP" id="MF_00146">
    <property type="entry name" value="dCTP_deaminase"/>
    <property type="match status" value="1"/>
</dbReference>
<dbReference type="InterPro" id="IPR011962">
    <property type="entry name" value="dCTP_deaminase"/>
</dbReference>
<dbReference type="InterPro" id="IPR036157">
    <property type="entry name" value="dUTPase-like_sf"/>
</dbReference>
<dbReference type="InterPro" id="IPR033704">
    <property type="entry name" value="dUTPase_trimeric"/>
</dbReference>
<dbReference type="NCBIfam" id="TIGR02274">
    <property type="entry name" value="dCTP_deam"/>
    <property type="match status" value="1"/>
</dbReference>
<dbReference type="PANTHER" id="PTHR42680">
    <property type="entry name" value="DCTP DEAMINASE"/>
    <property type="match status" value="1"/>
</dbReference>
<dbReference type="PANTHER" id="PTHR42680:SF3">
    <property type="entry name" value="DCTP DEAMINASE"/>
    <property type="match status" value="1"/>
</dbReference>
<dbReference type="Pfam" id="PF22769">
    <property type="entry name" value="DCD"/>
    <property type="match status" value="1"/>
</dbReference>
<dbReference type="SUPFAM" id="SSF51283">
    <property type="entry name" value="dUTPase-like"/>
    <property type="match status" value="1"/>
</dbReference>
<evidence type="ECO:0000255" key="1">
    <source>
        <dbReference type="HAMAP-Rule" id="MF_00146"/>
    </source>
</evidence>
<proteinExistence type="inferred from homology"/>
<organism>
    <name type="scientific">Dichelobacter nodosus (strain VCS1703A)</name>
    <dbReference type="NCBI Taxonomy" id="246195"/>
    <lineage>
        <taxon>Bacteria</taxon>
        <taxon>Pseudomonadati</taxon>
        <taxon>Pseudomonadota</taxon>
        <taxon>Gammaproteobacteria</taxon>
        <taxon>Cardiobacteriales</taxon>
        <taxon>Cardiobacteriaceae</taxon>
        <taxon>Dichelobacter</taxon>
    </lineage>
</organism>
<sequence length="188" mass="21303">MSIKNDKWIRRMAEQHKMIEPFAPHLVSRCDERSIISYGTSSYGYDVRCADEFKIFTNINSAIVDPKQFDSKSFVDVQSDVCIIPPNSFALARTIEYFRIPRDVLTICLGKSTYARCGIIVNVTPLEPEWEGHVTLEFSNTTPLPAKIYAHEGVAQLLFLQADDVCETSYKDRKGKYQGQTGVTLPRA</sequence>
<name>DCD_DICNV</name>